<dbReference type="EC" id="2.7.7.3" evidence="1"/>
<dbReference type="EMBL" id="CP001139">
    <property type="protein sequence ID" value="ACH64849.1"/>
    <property type="molecule type" value="Genomic_DNA"/>
</dbReference>
<dbReference type="RefSeq" id="WP_012532659.1">
    <property type="nucleotide sequence ID" value="NC_011184.1"/>
</dbReference>
<dbReference type="SMR" id="B5FFG3"/>
<dbReference type="KEGG" id="vfm:VFMJ11_0130"/>
<dbReference type="HOGENOM" id="CLU_100149_1_1_6"/>
<dbReference type="UniPathway" id="UPA00241">
    <property type="reaction ID" value="UER00355"/>
</dbReference>
<dbReference type="Proteomes" id="UP000001857">
    <property type="component" value="Chromosome I"/>
</dbReference>
<dbReference type="GO" id="GO:0005737">
    <property type="term" value="C:cytoplasm"/>
    <property type="evidence" value="ECO:0007669"/>
    <property type="project" value="UniProtKB-SubCell"/>
</dbReference>
<dbReference type="GO" id="GO:0005524">
    <property type="term" value="F:ATP binding"/>
    <property type="evidence" value="ECO:0007669"/>
    <property type="project" value="UniProtKB-KW"/>
</dbReference>
<dbReference type="GO" id="GO:0004595">
    <property type="term" value="F:pantetheine-phosphate adenylyltransferase activity"/>
    <property type="evidence" value="ECO:0007669"/>
    <property type="project" value="UniProtKB-UniRule"/>
</dbReference>
<dbReference type="GO" id="GO:0015937">
    <property type="term" value="P:coenzyme A biosynthetic process"/>
    <property type="evidence" value="ECO:0007669"/>
    <property type="project" value="UniProtKB-UniRule"/>
</dbReference>
<dbReference type="CDD" id="cd02163">
    <property type="entry name" value="PPAT"/>
    <property type="match status" value="1"/>
</dbReference>
<dbReference type="Gene3D" id="3.40.50.620">
    <property type="entry name" value="HUPs"/>
    <property type="match status" value="1"/>
</dbReference>
<dbReference type="HAMAP" id="MF_00151">
    <property type="entry name" value="PPAT_bact"/>
    <property type="match status" value="1"/>
</dbReference>
<dbReference type="InterPro" id="IPR004821">
    <property type="entry name" value="Cyt_trans-like"/>
</dbReference>
<dbReference type="InterPro" id="IPR001980">
    <property type="entry name" value="PPAT"/>
</dbReference>
<dbReference type="InterPro" id="IPR014729">
    <property type="entry name" value="Rossmann-like_a/b/a_fold"/>
</dbReference>
<dbReference type="NCBIfam" id="TIGR01510">
    <property type="entry name" value="coaD_prev_kdtB"/>
    <property type="match status" value="1"/>
</dbReference>
<dbReference type="NCBIfam" id="TIGR00125">
    <property type="entry name" value="cyt_tran_rel"/>
    <property type="match status" value="1"/>
</dbReference>
<dbReference type="PANTHER" id="PTHR21342">
    <property type="entry name" value="PHOSPHOPANTETHEINE ADENYLYLTRANSFERASE"/>
    <property type="match status" value="1"/>
</dbReference>
<dbReference type="PANTHER" id="PTHR21342:SF1">
    <property type="entry name" value="PHOSPHOPANTETHEINE ADENYLYLTRANSFERASE"/>
    <property type="match status" value="1"/>
</dbReference>
<dbReference type="Pfam" id="PF01467">
    <property type="entry name" value="CTP_transf_like"/>
    <property type="match status" value="1"/>
</dbReference>
<dbReference type="PRINTS" id="PR01020">
    <property type="entry name" value="LPSBIOSNTHSS"/>
</dbReference>
<dbReference type="SUPFAM" id="SSF52374">
    <property type="entry name" value="Nucleotidylyl transferase"/>
    <property type="match status" value="1"/>
</dbReference>
<sequence>MTKRVIYPGTFDPVTHGHSDIISRAANMFDHVVVGVAFSPSKKTMFSLEERMDMLVQATAHLNNVSVVGFSGLLVDLAKDQQANILVRGLRTTMDFEYELGLTTMYKKLMPELETIFLTPPEEHGFLSSTIVRETAIHGGKIDQFVHPYVASAIYQKVKQ</sequence>
<evidence type="ECO:0000255" key="1">
    <source>
        <dbReference type="HAMAP-Rule" id="MF_00151"/>
    </source>
</evidence>
<comment type="function">
    <text evidence="1">Reversibly transfers an adenylyl group from ATP to 4'-phosphopantetheine, yielding dephospho-CoA (dPCoA) and pyrophosphate.</text>
</comment>
<comment type="catalytic activity">
    <reaction evidence="1">
        <text>(R)-4'-phosphopantetheine + ATP + H(+) = 3'-dephospho-CoA + diphosphate</text>
        <dbReference type="Rhea" id="RHEA:19801"/>
        <dbReference type="ChEBI" id="CHEBI:15378"/>
        <dbReference type="ChEBI" id="CHEBI:30616"/>
        <dbReference type="ChEBI" id="CHEBI:33019"/>
        <dbReference type="ChEBI" id="CHEBI:57328"/>
        <dbReference type="ChEBI" id="CHEBI:61723"/>
        <dbReference type="EC" id="2.7.7.3"/>
    </reaction>
</comment>
<comment type="cofactor">
    <cofactor evidence="1">
        <name>Mg(2+)</name>
        <dbReference type="ChEBI" id="CHEBI:18420"/>
    </cofactor>
</comment>
<comment type="pathway">
    <text evidence="1">Cofactor biosynthesis; coenzyme A biosynthesis; CoA from (R)-pantothenate: step 4/5.</text>
</comment>
<comment type="subunit">
    <text evidence="1">Homohexamer.</text>
</comment>
<comment type="subcellular location">
    <subcellularLocation>
        <location evidence="1">Cytoplasm</location>
    </subcellularLocation>
</comment>
<comment type="similarity">
    <text evidence="1">Belongs to the bacterial CoaD family.</text>
</comment>
<protein>
    <recommendedName>
        <fullName evidence="1">Phosphopantetheine adenylyltransferase</fullName>
        <ecNumber evidence="1">2.7.7.3</ecNumber>
    </recommendedName>
    <alternativeName>
        <fullName evidence="1">Dephospho-CoA pyrophosphorylase</fullName>
    </alternativeName>
    <alternativeName>
        <fullName evidence="1">Pantetheine-phosphate adenylyltransferase</fullName>
        <shortName evidence="1">PPAT</shortName>
    </alternativeName>
</protein>
<proteinExistence type="inferred from homology"/>
<name>COAD_ALIFM</name>
<feature type="chain" id="PRO_1000123312" description="Phosphopantetheine adenylyltransferase">
    <location>
        <begin position="1"/>
        <end position="160"/>
    </location>
</feature>
<feature type="binding site" evidence="1">
    <location>
        <begin position="10"/>
        <end position="11"/>
    </location>
    <ligand>
        <name>ATP</name>
        <dbReference type="ChEBI" id="CHEBI:30616"/>
    </ligand>
</feature>
<feature type="binding site" evidence="1">
    <location>
        <position position="10"/>
    </location>
    <ligand>
        <name>substrate</name>
    </ligand>
</feature>
<feature type="binding site" evidence="1">
    <location>
        <position position="18"/>
    </location>
    <ligand>
        <name>ATP</name>
        <dbReference type="ChEBI" id="CHEBI:30616"/>
    </ligand>
</feature>
<feature type="binding site" evidence="1">
    <location>
        <position position="42"/>
    </location>
    <ligand>
        <name>substrate</name>
    </ligand>
</feature>
<feature type="binding site" evidence="1">
    <location>
        <position position="74"/>
    </location>
    <ligand>
        <name>substrate</name>
    </ligand>
</feature>
<feature type="binding site" evidence="1">
    <location>
        <position position="88"/>
    </location>
    <ligand>
        <name>substrate</name>
    </ligand>
</feature>
<feature type="binding site" evidence="1">
    <location>
        <begin position="89"/>
        <end position="91"/>
    </location>
    <ligand>
        <name>ATP</name>
        <dbReference type="ChEBI" id="CHEBI:30616"/>
    </ligand>
</feature>
<feature type="binding site" evidence="1">
    <location>
        <position position="99"/>
    </location>
    <ligand>
        <name>ATP</name>
        <dbReference type="ChEBI" id="CHEBI:30616"/>
    </ligand>
</feature>
<feature type="binding site" evidence="1">
    <location>
        <begin position="124"/>
        <end position="130"/>
    </location>
    <ligand>
        <name>ATP</name>
        <dbReference type="ChEBI" id="CHEBI:30616"/>
    </ligand>
</feature>
<feature type="site" description="Transition state stabilizer" evidence="1">
    <location>
        <position position="18"/>
    </location>
</feature>
<accession>B5FFG3</accession>
<reference key="1">
    <citation type="submission" date="2008-08" db="EMBL/GenBank/DDBJ databases">
        <title>Complete sequence of Vibrio fischeri strain MJ11.</title>
        <authorList>
            <person name="Mandel M.J."/>
            <person name="Stabb E.V."/>
            <person name="Ruby E.G."/>
            <person name="Ferriera S."/>
            <person name="Johnson J."/>
            <person name="Kravitz S."/>
            <person name="Beeson K."/>
            <person name="Sutton G."/>
            <person name="Rogers Y.-H."/>
            <person name="Friedman R."/>
            <person name="Frazier M."/>
            <person name="Venter J.C."/>
        </authorList>
    </citation>
    <scope>NUCLEOTIDE SEQUENCE [LARGE SCALE GENOMIC DNA]</scope>
    <source>
        <strain>MJ11</strain>
    </source>
</reference>
<gene>
    <name evidence="1" type="primary">coaD</name>
    <name type="ordered locus">VFMJ11_0130</name>
</gene>
<keyword id="KW-0067">ATP-binding</keyword>
<keyword id="KW-0173">Coenzyme A biosynthesis</keyword>
<keyword id="KW-0963">Cytoplasm</keyword>
<keyword id="KW-0460">Magnesium</keyword>
<keyword id="KW-0547">Nucleotide-binding</keyword>
<keyword id="KW-0548">Nucleotidyltransferase</keyword>
<keyword id="KW-0808">Transferase</keyword>
<organism>
    <name type="scientific">Aliivibrio fischeri (strain MJ11)</name>
    <name type="common">Vibrio fischeri</name>
    <dbReference type="NCBI Taxonomy" id="388396"/>
    <lineage>
        <taxon>Bacteria</taxon>
        <taxon>Pseudomonadati</taxon>
        <taxon>Pseudomonadota</taxon>
        <taxon>Gammaproteobacteria</taxon>
        <taxon>Vibrionales</taxon>
        <taxon>Vibrionaceae</taxon>
        <taxon>Aliivibrio</taxon>
    </lineage>
</organism>